<protein>
    <recommendedName>
        <fullName>Matrin-3</fullName>
    </recommendedName>
    <alternativeName>
        <fullName>Nuclear scaffold protein p130/MAT3</fullName>
    </alternativeName>
</protein>
<gene>
    <name type="primary">Matr3</name>
</gene>
<dbReference type="EMBL" id="M63485">
    <property type="protein sequence ID" value="AAB63955.1"/>
    <property type="molecule type" value="mRNA"/>
</dbReference>
<dbReference type="EMBL" id="AB205483">
    <property type="protein sequence ID" value="BAD90681.1"/>
    <property type="molecule type" value="mRNA"/>
</dbReference>
<dbReference type="RefSeq" id="NP_062022.2">
    <property type="nucleotide sequence ID" value="NM_019149.3"/>
</dbReference>
<dbReference type="RefSeq" id="XP_006254596.1">
    <property type="nucleotide sequence ID" value="XM_006254534.3"/>
</dbReference>
<dbReference type="RefSeq" id="XP_017456375.1">
    <property type="nucleotide sequence ID" value="XM_017600886.1"/>
</dbReference>
<dbReference type="RefSeq" id="XP_017456376.1">
    <property type="nucleotide sequence ID" value="XM_017600887.1"/>
</dbReference>
<dbReference type="SMR" id="P43244"/>
<dbReference type="BioGRID" id="247833">
    <property type="interactions" value="6"/>
</dbReference>
<dbReference type="FunCoup" id="P43244">
    <property type="interactions" value="3204"/>
</dbReference>
<dbReference type="IntAct" id="P43244">
    <property type="interactions" value="3"/>
</dbReference>
<dbReference type="MINT" id="P43244"/>
<dbReference type="STRING" id="10116.ENSRNOP00000073436"/>
<dbReference type="iPTMnet" id="P43244"/>
<dbReference type="PhosphoSitePlus" id="P43244"/>
<dbReference type="jPOST" id="P43244"/>
<dbReference type="PaxDb" id="10116-ENSRNOP00000026949"/>
<dbReference type="GeneID" id="29150"/>
<dbReference type="KEGG" id="rno:29150"/>
<dbReference type="UCSC" id="RGD:3052">
    <property type="organism name" value="rat"/>
</dbReference>
<dbReference type="AGR" id="RGD:3052"/>
<dbReference type="CTD" id="9782"/>
<dbReference type="RGD" id="3052">
    <property type="gene designation" value="Matr3"/>
</dbReference>
<dbReference type="eggNOG" id="ENOG502QRVG">
    <property type="taxonomic scope" value="Eukaryota"/>
</dbReference>
<dbReference type="InParanoid" id="P43244"/>
<dbReference type="OrthoDB" id="9938441at2759"/>
<dbReference type="PhylomeDB" id="P43244"/>
<dbReference type="TreeFam" id="TF333921"/>
<dbReference type="PRO" id="PR:P43244"/>
<dbReference type="Proteomes" id="UP000002494">
    <property type="component" value="Unplaced"/>
</dbReference>
<dbReference type="GO" id="GO:0016363">
    <property type="term" value="C:nuclear matrix"/>
    <property type="evidence" value="ECO:0000314"/>
    <property type="project" value="RGD"/>
</dbReference>
<dbReference type="GO" id="GO:0005634">
    <property type="term" value="C:nucleus"/>
    <property type="evidence" value="ECO:0000266"/>
    <property type="project" value="RGD"/>
</dbReference>
<dbReference type="GO" id="GO:0042802">
    <property type="term" value="F:identical protein binding"/>
    <property type="evidence" value="ECO:0000266"/>
    <property type="project" value="RGD"/>
</dbReference>
<dbReference type="GO" id="GO:0035198">
    <property type="term" value="F:miRNA binding"/>
    <property type="evidence" value="ECO:0000250"/>
    <property type="project" value="UniProtKB"/>
</dbReference>
<dbReference type="GO" id="GO:0003723">
    <property type="term" value="F:RNA binding"/>
    <property type="evidence" value="ECO:0000318"/>
    <property type="project" value="GO_Central"/>
</dbReference>
<dbReference type="GO" id="GO:0008270">
    <property type="term" value="F:zinc ion binding"/>
    <property type="evidence" value="ECO:0007669"/>
    <property type="project" value="UniProtKB-KW"/>
</dbReference>
<dbReference type="GO" id="GO:0002218">
    <property type="term" value="P:activation of innate immune response"/>
    <property type="evidence" value="ECO:0000266"/>
    <property type="project" value="RGD"/>
</dbReference>
<dbReference type="GO" id="GO:0001825">
    <property type="term" value="P:blastocyst formation"/>
    <property type="evidence" value="ECO:0000266"/>
    <property type="project" value="RGD"/>
</dbReference>
<dbReference type="GO" id="GO:0003170">
    <property type="term" value="P:heart valve development"/>
    <property type="evidence" value="ECO:0000266"/>
    <property type="project" value="RGD"/>
</dbReference>
<dbReference type="GO" id="GO:0045087">
    <property type="term" value="P:innate immune response"/>
    <property type="evidence" value="ECO:0007669"/>
    <property type="project" value="UniProtKB-KW"/>
</dbReference>
<dbReference type="GO" id="GO:0010608">
    <property type="term" value="P:post-transcriptional regulation of gene expression"/>
    <property type="evidence" value="ECO:0000266"/>
    <property type="project" value="RGD"/>
</dbReference>
<dbReference type="GO" id="GO:0003281">
    <property type="term" value="P:ventricular septum development"/>
    <property type="evidence" value="ECO:0000266"/>
    <property type="project" value="RGD"/>
</dbReference>
<dbReference type="CDD" id="cd12714">
    <property type="entry name" value="RRM1_MATR3"/>
    <property type="match status" value="1"/>
</dbReference>
<dbReference type="CDD" id="cd12715">
    <property type="entry name" value="RRM2_MATR3"/>
    <property type="match status" value="1"/>
</dbReference>
<dbReference type="FunFam" id="3.30.70.330:FF:000151">
    <property type="entry name" value="matrin-3 isoform X1"/>
    <property type="match status" value="1"/>
</dbReference>
<dbReference type="FunFam" id="3.30.70.330:FF:000149">
    <property type="entry name" value="matrin-3 isoform X2"/>
    <property type="match status" value="1"/>
</dbReference>
<dbReference type="Gene3D" id="3.30.70.330">
    <property type="match status" value="2"/>
</dbReference>
<dbReference type="InterPro" id="IPR034928">
    <property type="entry name" value="MATR3_RRM1"/>
</dbReference>
<dbReference type="InterPro" id="IPR034930">
    <property type="entry name" value="MATR3_RRM2"/>
</dbReference>
<dbReference type="InterPro" id="IPR000690">
    <property type="entry name" value="Matrin/U1-C_Znf_C2H2"/>
</dbReference>
<dbReference type="InterPro" id="IPR003604">
    <property type="entry name" value="Matrin/U1-like-C_Znf_C2H2"/>
</dbReference>
<dbReference type="InterPro" id="IPR012677">
    <property type="entry name" value="Nucleotide-bd_a/b_plait_sf"/>
</dbReference>
<dbReference type="InterPro" id="IPR035979">
    <property type="entry name" value="RBD_domain_sf"/>
</dbReference>
<dbReference type="InterPro" id="IPR000504">
    <property type="entry name" value="RRM_dom"/>
</dbReference>
<dbReference type="PANTHER" id="PTHR15592">
    <property type="entry name" value="MATRIN 3/NUCLEAR PROTEIN 220-RELATED"/>
    <property type="match status" value="1"/>
</dbReference>
<dbReference type="SMART" id="SM00360">
    <property type="entry name" value="RRM"/>
    <property type="match status" value="2"/>
</dbReference>
<dbReference type="SMART" id="SM00451">
    <property type="entry name" value="ZnF_U1"/>
    <property type="match status" value="2"/>
</dbReference>
<dbReference type="SUPFAM" id="SSF54928">
    <property type="entry name" value="RNA-binding domain, RBD"/>
    <property type="match status" value="2"/>
</dbReference>
<dbReference type="PROSITE" id="PS50102">
    <property type="entry name" value="RRM"/>
    <property type="match status" value="2"/>
</dbReference>
<dbReference type="PROSITE" id="PS50171">
    <property type="entry name" value="ZF_MATRIN"/>
    <property type="match status" value="1"/>
</dbReference>
<organism>
    <name type="scientific">Rattus norvegicus</name>
    <name type="common">Rat</name>
    <dbReference type="NCBI Taxonomy" id="10116"/>
    <lineage>
        <taxon>Eukaryota</taxon>
        <taxon>Metazoa</taxon>
        <taxon>Chordata</taxon>
        <taxon>Craniata</taxon>
        <taxon>Vertebrata</taxon>
        <taxon>Euteleostomi</taxon>
        <taxon>Mammalia</taxon>
        <taxon>Eutheria</taxon>
        <taxon>Euarchontoglires</taxon>
        <taxon>Glires</taxon>
        <taxon>Rodentia</taxon>
        <taxon>Myomorpha</taxon>
        <taxon>Muroidea</taxon>
        <taxon>Muridae</taxon>
        <taxon>Murinae</taxon>
        <taxon>Rattus</taxon>
    </lineage>
</organism>
<feature type="initiator methionine" description="Removed" evidence="1">
    <location>
        <position position="1"/>
    </location>
</feature>
<feature type="chain" id="PRO_0000081624" description="Matrin-3">
    <location>
        <begin position="2"/>
        <end position="845"/>
    </location>
</feature>
<feature type="domain" description="RRM 1" evidence="4">
    <location>
        <begin position="398"/>
        <end position="473"/>
    </location>
</feature>
<feature type="domain" description="RRM 2" evidence="4">
    <location>
        <begin position="496"/>
        <end position="571"/>
    </location>
</feature>
<feature type="zinc finger region" description="Matrin-type" evidence="3">
    <location>
        <begin position="799"/>
        <end position="830"/>
    </location>
</feature>
<feature type="region of interest" description="Disordered" evidence="5">
    <location>
        <begin position="147"/>
        <end position="174"/>
    </location>
</feature>
<feature type="region of interest" description="Disordered" evidence="5">
    <location>
        <begin position="187"/>
        <end position="213"/>
    </location>
</feature>
<feature type="region of interest" description="Disordered" evidence="5">
    <location>
        <begin position="342"/>
        <end position="394"/>
    </location>
</feature>
<feature type="region of interest" description="Disordered" evidence="5">
    <location>
        <begin position="588"/>
        <end position="785"/>
    </location>
</feature>
<feature type="short sequence motif" description="Nuclear localization signal" evidence="2">
    <location>
        <begin position="708"/>
        <end position="716"/>
    </location>
</feature>
<feature type="compositionally biased region" description="Basic and acidic residues" evidence="5">
    <location>
        <begin position="160"/>
        <end position="174"/>
    </location>
</feature>
<feature type="compositionally biased region" description="Basic and acidic residues" evidence="5">
    <location>
        <begin position="201"/>
        <end position="213"/>
    </location>
</feature>
<feature type="compositionally biased region" description="Basic and acidic residues" evidence="5">
    <location>
        <begin position="600"/>
        <end position="643"/>
    </location>
</feature>
<feature type="compositionally biased region" description="Acidic residues" evidence="5">
    <location>
        <begin position="653"/>
        <end position="665"/>
    </location>
</feature>
<feature type="compositionally biased region" description="Basic and acidic residues" evidence="5">
    <location>
        <begin position="689"/>
        <end position="704"/>
    </location>
</feature>
<feature type="compositionally biased region" description="Basic and acidic residues" evidence="5">
    <location>
        <begin position="765"/>
        <end position="778"/>
    </location>
</feature>
<feature type="modified residue" description="N-acetylserine" evidence="1">
    <location>
        <position position="2"/>
    </location>
</feature>
<feature type="modified residue" description="N6-acetyllysine; alternate" evidence="1">
    <location>
        <position position="3"/>
    </location>
</feature>
<feature type="modified residue" description="Phosphoserine" evidence="1">
    <location>
        <position position="4"/>
    </location>
</feature>
<feature type="modified residue" description="Phosphoserine" evidence="1">
    <location>
        <position position="9"/>
    </location>
</feature>
<feature type="modified residue" description="Phosphoserine" evidence="1">
    <location>
        <position position="14"/>
    </location>
</feature>
<feature type="modified residue" description="Phosphoserine" evidence="1">
    <location>
        <position position="22"/>
    </location>
</feature>
<feature type="modified residue" description="Phosphoserine" evidence="1">
    <location>
        <position position="41"/>
    </location>
</feature>
<feature type="modified residue" description="Phosphoserine" evidence="1">
    <location>
        <position position="118"/>
    </location>
</feature>
<feature type="modified residue" description="Phosphoserine" evidence="1">
    <location>
        <position position="126"/>
    </location>
</feature>
<feature type="modified residue" description="Phosphothreonine" evidence="1">
    <location>
        <position position="150"/>
    </location>
</feature>
<feature type="modified residue" description="Phosphoserine" evidence="1">
    <location>
        <position position="157"/>
    </location>
</feature>
<feature type="modified residue" description="Phosphotyrosine" evidence="1">
    <location>
        <position position="158"/>
    </location>
</feature>
<feature type="modified residue" description="Phosphoserine" evidence="1">
    <location>
        <position position="164"/>
    </location>
</feature>
<feature type="modified residue" description="Phosphoserine" evidence="7 8">
    <location>
        <position position="188"/>
    </location>
</feature>
<feature type="modified residue" description="Phosphoserine" evidence="8">
    <location>
        <position position="195"/>
    </location>
</feature>
<feature type="modified residue" description="Phosphotyrosine" evidence="1">
    <location>
        <position position="202"/>
    </location>
</feature>
<feature type="modified residue" description="Phosphoserine" evidence="8">
    <location>
        <position position="206"/>
    </location>
</feature>
<feature type="modified residue" description="Phosphoserine" evidence="8">
    <location>
        <position position="208"/>
    </location>
</feature>
<feature type="modified residue" description="Phosphoserine" evidence="1">
    <location>
        <position position="211"/>
    </location>
</feature>
<feature type="modified residue" description="Phosphotyrosine" evidence="1">
    <location>
        <position position="219"/>
    </location>
</feature>
<feature type="modified residue" description="Phosphoserine" evidence="1">
    <location>
        <position position="234"/>
    </location>
</feature>
<feature type="modified residue" description="Phosphoserine" evidence="1">
    <location>
        <position position="264"/>
    </location>
</feature>
<feature type="modified residue" description="Phosphoserine" evidence="1">
    <location>
        <position position="275"/>
    </location>
</feature>
<feature type="modified residue" description="Phosphoserine" evidence="1">
    <location>
        <position position="509"/>
    </location>
</feature>
<feature type="modified residue" description="Phosphoserine" evidence="1">
    <location>
        <position position="511"/>
    </location>
</feature>
<feature type="modified residue" description="N6-acetyllysine; alternate" evidence="1">
    <location>
        <position position="522"/>
    </location>
</feature>
<feature type="modified residue" description="Phosphoserine" evidence="1">
    <location>
        <position position="533"/>
    </location>
</feature>
<feature type="modified residue" description="N6-acetyllysine" evidence="1">
    <location>
        <position position="571"/>
    </location>
</feature>
<feature type="modified residue" description="Phosphoserine" evidence="1">
    <location>
        <position position="596"/>
    </location>
</feature>
<feature type="modified residue" description="Phosphoserine" evidence="8">
    <location>
        <position position="598"/>
    </location>
</feature>
<feature type="modified residue" description="Phosphoserine" evidence="1">
    <location>
        <position position="604"/>
    </location>
</feature>
<feature type="modified residue" description="Phosphoserine" evidence="1">
    <location>
        <position position="606"/>
    </location>
</feature>
<feature type="modified residue" description="Phosphoserine" evidence="1">
    <location>
        <position position="654"/>
    </location>
</feature>
<feature type="modified residue" description="Phosphoserine" evidence="1">
    <location>
        <position position="671"/>
    </location>
</feature>
<feature type="modified residue" description="Phosphoserine" evidence="1">
    <location>
        <position position="673"/>
    </location>
</feature>
<feature type="modified residue" description="Phosphoserine" evidence="1">
    <location>
        <position position="674"/>
    </location>
</feature>
<feature type="modified residue" description="Phosphothreonine" evidence="1">
    <location>
        <position position="679"/>
    </location>
</feature>
<feature type="modified residue" description="Phosphoserine" evidence="1">
    <location>
        <position position="689"/>
    </location>
</feature>
<feature type="modified residue" description="Phosphothreonine" evidence="8">
    <location>
        <position position="739"/>
    </location>
</feature>
<feature type="modified residue" description="Phosphoserine" evidence="8">
    <location>
        <position position="745"/>
    </location>
</feature>
<feature type="modified residue" description="Phosphoserine" evidence="8">
    <location>
        <position position="757"/>
    </location>
</feature>
<feature type="modified residue" description="Phosphoserine" evidence="8">
    <location>
        <position position="760"/>
    </location>
</feature>
<feature type="modified residue" description="N6-acetyllysine; alternate" evidence="1">
    <location>
        <position position="834"/>
    </location>
</feature>
<feature type="cross-link" description="Glycyl lysine isopeptide (Lys-Gly) (interchain with G-Cter in SUMO2); alternate" evidence="1">
    <location>
        <position position="3"/>
    </location>
</feature>
<feature type="cross-link" description="Glycyl lysine isopeptide (Lys-Gly) (interchain with G-Cter in SUMO2)" evidence="1">
    <location>
        <position position="132"/>
    </location>
</feature>
<feature type="cross-link" description="Glycyl lysine isopeptide (Lys-Gly) (interchain with G-Cter in SUMO2)" evidence="1">
    <location>
        <position position="146"/>
    </location>
</feature>
<feature type="cross-link" description="Glycyl lysine isopeptide (Lys-Gly) (interchain with G-Cter in SUMO2)" evidence="1">
    <location>
        <position position="245"/>
    </location>
</feature>
<feature type="cross-link" description="Glycyl lysine isopeptide (Lys-Gly) (interchain with G-Cter in SUMO2)" evidence="1">
    <location>
        <position position="269"/>
    </location>
</feature>
<feature type="cross-link" description="Glycyl lysine isopeptide (Lys-Gly) (interchain with G-Cter in SUMO2)" evidence="1">
    <location>
        <position position="478"/>
    </location>
</feature>
<feature type="cross-link" description="Glycyl lysine isopeptide (Lys-Gly) (interchain with G-Cter in SUMO2)" evidence="1">
    <location>
        <position position="487"/>
    </location>
</feature>
<feature type="cross-link" description="Glycyl lysine isopeptide (Lys-Gly) (interchain with G-Cter in SUMO2)" evidence="1">
    <location>
        <position position="491"/>
    </location>
</feature>
<feature type="cross-link" description="Glycyl lysine isopeptide (Lys-Gly) (interchain with G-Cter in SUMO2)" evidence="1">
    <location>
        <position position="515"/>
    </location>
</feature>
<feature type="cross-link" description="Glycyl lysine isopeptide (Lys-Gly) (interchain with G-Cter in SUMO2); alternate" evidence="1">
    <location>
        <position position="522"/>
    </location>
</feature>
<feature type="cross-link" description="Glycyl lysine isopeptide (Lys-Gly) (interchain with G-Cter in SUMO2)" evidence="1">
    <location>
        <position position="554"/>
    </location>
</feature>
<feature type="cross-link" description="Glycyl lysine isopeptide (Lys-Gly) (interchain with G-Cter in SUMO2)" evidence="1">
    <location>
        <position position="555"/>
    </location>
</feature>
<feature type="cross-link" description="Glycyl lysine isopeptide (Lys-Gly) (interchain with G-Cter in SUMO2)" evidence="1">
    <location>
        <position position="617"/>
    </location>
</feature>
<feature type="cross-link" description="Glycyl lysine isopeptide (Lys-Gly) (interchain with G-Cter in SUMO2)" evidence="1">
    <location>
        <position position="630"/>
    </location>
</feature>
<feature type="cross-link" description="Glycyl lysine isopeptide (Lys-Gly) (interchain with G-Cter in SUMO2)" evidence="1">
    <location>
        <position position="717"/>
    </location>
</feature>
<feature type="cross-link" description="Glycyl lysine isopeptide (Lys-Gly) (interchain with G-Cter in SUMO2)" evidence="1">
    <location>
        <position position="734"/>
    </location>
</feature>
<feature type="cross-link" description="Glycyl lysine isopeptide (Lys-Gly) (interchain with G-Cter in SUMO2)" evidence="1">
    <location>
        <position position="768"/>
    </location>
</feature>
<feature type="cross-link" description="Glycyl lysine isopeptide (Lys-Gly) (interchain with G-Cter in SUMO2); alternate" evidence="1">
    <location>
        <position position="834"/>
    </location>
</feature>
<feature type="sequence conflict" description="In Ref. 3; BAD90681." evidence="6" ref="3">
    <original>E</original>
    <variation>Q</variation>
    <location>
        <position position="486"/>
    </location>
</feature>
<feature type="sequence conflict" description="In Ref. 3; BAD90681." evidence="6" ref="3">
    <original>I</original>
    <variation>L</variation>
    <location>
        <position position="669"/>
    </location>
</feature>
<feature type="sequence conflict" description="In Ref. 3; BAD90681." evidence="6" ref="3">
    <original>G</original>
    <variation>V</variation>
    <location>
        <position position="788"/>
    </location>
</feature>
<feature type="sequence conflict" description="In Ref. 3; BAD90681." evidence="6" ref="3">
    <original>S</original>
    <variation>T</variation>
    <location>
        <position position="845"/>
    </location>
</feature>
<sequence length="845" mass="94447">MSKSFQQSSLGRDSQGHGRDLSAAGIGLLAAATQSLSMPASLGRMNQGTARLASLMNLGMSSSLNQQGAHSALSSASTSSHNLQSIFNIGSRGPLPLSSQHRGDTDQASNILASFGLSARDLDELSRYPEDKITPENLPQILLQLKRRRTEEGPTLSYGRDGRSATREPPYRVPRDDWEEKRHFRRDSFDDRGPSLNPVLDYDHGSRSQESGYYDRMDYEDDRLRDGERCRDDSFFGETSHNYHKFDSEYERMGRGPGPLQERSLFEKKRGAPPSSNIEDFHGLLPKGYPHLCSICDLPVHSNKEWSQHINGASHSRRCQLLLEIYPEWNPDNDTGHTMGDPFMLQQSTNPAPGILGPPPPSFHLGGPAVGPRGNLGAGNGNLQGPRHMQKGRVETSRVVHIMDFQRGKNLRYQLLQLVEPFGVISNHLILNKINEAFIEMATTEDAQAAVDYYTTTPALVFGKPVRVHLSQKYKRIKKPEGKPDEKFDQKQELGRVIHLSNLPHSGYSDSAVLKLAEPYGKIKNYILMRMKSQAFIEMETREDAMAMVDHCLKKALWFQGRCVKVDLSEKYKKLVLRIPNRGIDLLKKDKSRKRSYSPDGKESPSDKKSKTDGAQKTENPAEGKEQEEKSGEDGEKDTKDDQTEQEPSMLLESEDELLVDEEEAAALIESGSSVGDETDLANLGDVSSDGKKEPSDKAVKKDASATSKKKLKKVDKIEELDQENEAALENGIKNEENTEPGAESAENADDPNKDASDNSDGQNDENKEDYTIPDEYRIGPYQPNVPGGIDYVIPKTGFYCKLCSLFYTNEEVAKNTHCSSLPHYQKLKKFLNKLAEERRQKKES</sequence>
<reference key="1">
    <citation type="journal article" date="1991" name="J. Biol. Chem.">
        <title>Molecular cloning of matrin 3. A 125-kilodalton protein of the nuclear matrix contains an extensive acidic domain.</title>
        <authorList>
            <person name="Belgrader P."/>
            <person name="Dey R."/>
            <person name="Berezney R."/>
        </authorList>
    </citation>
    <scope>NUCLEOTIDE SEQUENCE [MRNA]</scope>
    <source>
        <strain>Sprague-Dawley</strain>
    </source>
</reference>
<reference key="2">
    <citation type="submission" date="1997-07" db="EMBL/GenBank/DDBJ databases">
        <authorList>
            <person name="Berezney R."/>
        </authorList>
    </citation>
    <scope>SEQUENCE REVISION</scope>
</reference>
<reference key="3">
    <citation type="submission" date="2005-03" db="EMBL/GenBank/DDBJ databases">
        <authorList>
            <person name="Hibino Y."/>
        </authorList>
    </citation>
    <scope>NUCLEOTIDE SEQUENCE [MRNA]</scope>
</reference>
<reference key="4">
    <citation type="journal article" date="2006" name="Proc. Natl. Acad. Sci. U.S.A.">
        <title>Quantitative phosphoproteomics of vasopressin-sensitive renal cells: regulation of aquaporin-2 phosphorylation at two sites.</title>
        <authorList>
            <person name="Hoffert J.D."/>
            <person name="Pisitkun T."/>
            <person name="Wang G."/>
            <person name="Shen R.-F."/>
            <person name="Knepper M.A."/>
        </authorList>
    </citation>
    <scope>PHOSPHORYLATION [LARGE SCALE ANALYSIS] AT SER-188</scope>
    <scope>IDENTIFICATION BY MASS SPECTROMETRY [LARGE SCALE ANALYSIS]</scope>
</reference>
<reference key="5">
    <citation type="journal article" date="2012" name="Nat. Commun.">
        <title>Quantitative maps of protein phosphorylation sites across 14 different rat organs and tissues.</title>
        <authorList>
            <person name="Lundby A."/>
            <person name="Secher A."/>
            <person name="Lage K."/>
            <person name="Nordsborg N.B."/>
            <person name="Dmytriyev A."/>
            <person name="Lundby C."/>
            <person name="Olsen J.V."/>
        </authorList>
    </citation>
    <scope>PHOSPHORYLATION [LARGE SCALE ANALYSIS] AT SER-188; SER-195; SER-206; SER-208; SER-598; THR-739; SER-745; SER-757 AND SER-760</scope>
    <scope>IDENTIFICATION BY MASS SPECTROMETRY [LARGE SCALE ANALYSIS]</scope>
</reference>
<accession>P43244</accession>
<accession>O35833</accession>
<accession>Q5DVW1</accession>
<evidence type="ECO:0000250" key="1">
    <source>
        <dbReference type="UniProtKB" id="P43243"/>
    </source>
</evidence>
<evidence type="ECO:0000255" key="2"/>
<evidence type="ECO:0000255" key="3">
    <source>
        <dbReference type="PROSITE-ProRule" id="PRU00130"/>
    </source>
</evidence>
<evidence type="ECO:0000255" key="4">
    <source>
        <dbReference type="PROSITE-ProRule" id="PRU00176"/>
    </source>
</evidence>
<evidence type="ECO:0000256" key="5">
    <source>
        <dbReference type="SAM" id="MobiDB-lite"/>
    </source>
</evidence>
<evidence type="ECO:0000305" key="6"/>
<evidence type="ECO:0007744" key="7">
    <source>
    </source>
</evidence>
<evidence type="ECO:0007744" key="8">
    <source>
    </source>
</evidence>
<name>MATR3_RAT</name>
<proteinExistence type="evidence at protein level"/>
<keyword id="KW-0007">Acetylation</keyword>
<keyword id="KW-0391">Immunity</keyword>
<keyword id="KW-0399">Innate immunity</keyword>
<keyword id="KW-1017">Isopeptide bond</keyword>
<keyword id="KW-0479">Metal-binding</keyword>
<keyword id="KW-0539">Nucleus</keyword>
<keyword id="KW-0597">Phosphoprotein</keyword>
<keyword id="KW-1185">Reference proteome</keyword>
<keyword id="KW-0677">Repeat</keyword>
<keyword id="KW-0694">RNA-binding</keyword>
<keyword id="KW-0832">Ubl conjugation</keyword>
<keyword id="KW-0862">Zinc</keyword>
<keyword id="KW-0863">Zinc-finger</keyword>
<comment type="function">
    <text evidence="1">May play a role in transcription or may interact with other nuclear matrix proteins to form the internal fibrogranular network. In association with the SFPQ-NONO heteromer may play a role in nuclear retention of defective RNAs. Plays a role in the regulation of DNA virus-mediated innate immune response by assembling into the HDP-RNP complex, a complex that serves as a platform for IRF3 phosphorylation and subsequent innate immune response activation through the cGAS-STING pathway. Binds to N6-methyladenosine (m6A)-containing mRNAs and contributes to MYC stability by binding to m6A-containing MYC mRNAs. May bind to specific miRNA hairpins.</text>
</comment>
<comment type="subunit">
    <text evidence="1">Part of a complex consisting of SFPQ, NONO and MATR3. Interacts with AGO1 and AGO2 (By similarity). Part of a complex composed at least of ASH2L, EMSY, HCFC1, HSPA8, CCAR2, MATR3, MKI67, RBBP5, TUBB2A, WDR5 and ZNF335; this complex may have a histone H3-specific methyltransferase activity. Interacts with TARDBP. Part of the HDP-RNP complex composed of at least HEXIM1, PRKDC, XRCC5, XRCC6, paraspeckle proteins (SFPQ, NONO, PSPC1, RBM14, and MATR3) and NEAT1 RNA. Interacts with FUS. Interacts with IGF2BP1. Interacts with IGF2BP2 and IGF2BP3. Interacts with RBPMS (By similarity).</text>
</comment>
<comment type="subcellular location">
    <subcellularLocation>
        <location>Nucleus matrix</location>
    </subcellularLocation>
</comment>